<dbReference type="EC" id="3.4.21.-"/>
<dbReference type="SMR" id="P86545"/>
<dbReference type="Proteomes" id="UP000694559">
    <property type="component" value="Unplaced"/>
</dbReference>
<dbReference type="GO" id="GO:0005576">
    <property type="term" value="C:extracellular region"/>
    <property type="evidence" value="ECO:0007669"/>
    <property type="project" value="UniProtKB-SubCell"/>
</dbReference>
<dbReference type="GO" id="GO:0004252">
    <property type="term" value="F:serine-type endopeptidase activity"/>
    <property type="evidence" value="ECO:0007669"/>
    <property type="project" value="InterPro"/>
</dbReference>
<dbReference type="GO" id="GO:0090729">
    <property type="term" value="F:toxin activity"/>
    <property type="evidence" value="ECO:0007669"/>
    <property type="project" value="UniProtKB-KW"/>
</dbReference>
<dbReference type="GO" id="GO:0006508">
    <property type="term" value="P:proteolysis"/>
    <property type="evidence" value="ECO:0007669"/>
    <property type="project" value="UniProtKB-KW"/>
</dbReference>
<dbReference type="Gene3D" id="2.40.10.10">
    <property type="entry name" value="Trypsin-like serine proteases"/>
    <property type="match status" value="1"/>
</dbReference>
<dbReference type="InterPro" id="IPR009003">
    <property type="entry name" value="Peptidase_S1_PA"/>
</dbReference>
<dbReference type="InterPro" id="IPR043504">
    <property type="entry name" value="Peptidase_S1_PA_chymotrypsin"/>
</dbReference>
<dbReference type="InterPro" id="IPR001254">
    <property type="entry name" value="Trypsin_dom"/>
</dbReference>
<dbReference type="Pfam" id="PF00089">
    <property type="entry name" value="Trypsin"/>
    <property type="match status" value="1"/>
</dbReference>
<dbReference type="SUPFAM" id="SSF50494">
    <property type="entry name" value="Trypsin-like serine proteases"/>
    <property type="match status" value="1"/>
</dbReference>
<organism>
    <name type="scientific">Naja naja</name>
    <name type="common">Indian cobra</name>
    <dbReference type="NCBI Taxonomy" id="35670"/>
    <lineage>
        <taxon>Eukaryota</taxon>
        <taxon>Metazoa</taxon>
        <taxon>Chordata</taxon>
        <taxon>Craniata</taxon>
        <taxon>Vertebrata</taxon>
        <taxon>Euteleostomi</taxon>
        <taxon>Lepidosauria</taxon>
        <taxon>Squamata</taxon>
        <taxon>Bifurcata</taxon>
        <taxon>Unidentata</taxon>
        <taxon>Episquamata</taxon>
        <taxon>Toxicofera</taxon>
        <taxon>Serpentes</taxon>
        <taxon>Colubroidea</taxon>
        <taxon>Elapidae</taxon>
        <taxon>Elapinae</taxon>
        <taxon>Naja</taxon>
    </lineage>
</organism>
<reference evidence="6" key="1">
    <citation type="journal article" date="2010" name="Biomed. Res.">
        <title>Molecular diversity in venom proteins of the Russell's viper (Daboia russellii russellii) and the Indian cobra (Naja naja) in Sri Lanka.</title>
        <authorList>
            <person name="Suzuki M."/>
            <person name="Itoh T."/>
            <person name="Bandaranayake B.M.A.I.K."/>
            <person name="Ranasinghe J.G."/>
            <person name="Athauda S.B."/>
            <person name="Moriyama A."/>
        </authorList>
    </citation>
    <scope>PROTEIN SEQUENCE</scope>
    <scope>FUNCTION</scope>
    <scope>SUBCELLULAR LOCATION</scope>
    <scope>TISSUE SPECIFICITY</scope>
    <source>
        <tissue evidence="4">Venom</tissue>
    </source>
</reference>
<keyword id="KW-1204">Blood coagulation cascade activating toxin</keyword>
<keyword id="KW-0903">Direct protein sequencing</keyword>
<keyword id="KW-1015">Disulfide bond</keyword>
<keyword id="KW-1199">Hemostasis impairing toxin</keyword>
<keyword id="KW-0378">Hydrolase</keyword>
<keyword id="KW-0645">Protease</keyword>
<keyword id="KW-1185">Reference proteome</keyword>
<keyword id="KW-0964">Secreted</keyword>
<keyword id="KW-0720">Serine protease</keyword>
<keyword id="KW-0800">Toxin</keyword>
<sequence length="36" mass="4114">IGGFECNEHEHRSLVYLYNSAGFFCAGTLLNHEWVV</sequence>
<comment type="function">
    <text evidence="4">Thrombin-like snake venom serine protease. Shows strong hydrolytic activity towards Boc-Asp(oBzl)-Pro-Arg-MCA, a synthetic substrate for thrombin.</text>
</comment>
<comment type="subunit">
    <text evidence="1">Monomer.</text>
</comment>
<comment type="subcellular location">
    <subcellularLocation>
        <location evidence="4">Secreted</location>
    </subcellularLocation>
</comment>
<comment type="tissue specificity">
    <text evidence="4">Expressed by the venom gland.</text>
</comment>
<comment type="similarity">
    <text evidence="3">Belongs to the peptidase S1 family. Snake venom subfamily.</text>
</comment>
<name>VSP_NAJNA</name>
<feature type="chain" id="PRO_0000394692" description="Thrombin-like enzyme TLP">
    <location>
        <begin position="1"/>
        <end position="36" status="greater than"/>
    </location>
</feature>
<feature type="domain" description="Peptidase S1" evidence="3">
    <location>
        <begin position="1"/>
        <end position="36" status="greater than"/>
    </location>
</feature>
<feature type="disulfide bond" evidence="2 3">
    <location>
        <begin position="6"/>
        <end status="unknown"/>
    </location>
</feature>
<feature type="disulfide bond" evidence="2 3">
    <location>
        <begin position="25"/>
        <end status="unknown"/>
    </location>
</feature>
<feature type="non-terminal residue" evidence="5">
    <location>
        <position position="36"/>
    </location>
</feature>
<accession>P86545</accession>
<protein>
    <recommendedName>
        <fullName>Thrombin-like enzyme TLP</fullName>
        <shortName>SVTLE</shortName>
        <ecNumber>3.4.21.-</ecNumber>
    </recommendedName>
    <alternativeName>
        <fullName>Fibrinogen-clotting enzyme</fullName>
    </alternativeName>
    <alternativeName>
        <fullName>Snake venom serine protease</fullName>
        <shortName>SVSP</shortName>
    </alternativeName>
</protein>
<proteinExistence type="evidence at protein level"/>
<evidence type="ECO:0000250" key="1"/>
<evidence type="ECO:0000250" key="2">
    <source>
        <dbReference type="UniProtKB" id="Q91516"/>
    </source>
</evidence>
<evidence type="ECO:0000255" key="3">
    <source>
        <dbReference type="PROSITE-ProRule" id="PRU00274"/>
    </source>
</evidence>
<evidence type="ECO:0000269" key="4">
    <source>
    </source>
</evidence>
<evidence type="ECO:0000303" key="5">
    <source>
    </source>
</evidence>
<evidence type="ECO:0000305" key="6"/>